<proteinExistence type="evidence at protein level"/>
<comment type="function">
    <text evidence="4">Contributes to the transparency and refractive index of the lens. Acts as a chaperone, preventing aggregation of various proteins under a wide range of stress conditions. Required for the correct formation of lens intermediate filaments as part of a complex composed of BFSP1, BFSP2 and CRYAA.</text>
</comment>
<comment type="subunit">
    <text evidence="2 4">Heteromer composed of three CRYAA and one CRYAB subunits. Inter-subunit bridging via zinc ions enhances stability, which is crucial as there is no protein turn over in the lens. Can also form homodimers and homotetramers (dimers of dimers) which serve as the building blocks of homooligomers (By similarity). Within homooligomers, the zinc-binding motif is created from residues of 3 different molecules. His-100 and Glu-102 from one molecule are ligands of the zinc ion, and His-107 and His-154 residues from additional molecules complete the site with tetrahedral coordination geometry (By similarity). Part of a complex required for lens intermediate filament formation composed of BFSP1, BFSP2 and CRYAA (By similarity).</text>
</comment>
<comment type="subcellular location">
    <subcellularLocation>
        <location evidence="4">Cytoplasm</location>
    </subcellularLocation>
    <subcellularLocation>
        <location evidence="4">Nucleus</location>
    </subcellularLocation>
    <text evidence="4">Translocates to the nucleus during heat shock and resides in sub-nuclear structures known as SC35 speckles or nuclear splicing speckles.</text>
</comment>
<comment type="PTM">
    <text evidence="4">Acetylation at Lys-70 may increase chaperone activity.</text>
</comment>
<comment type="PTM">
    <text evidence="4">Undergoes age-dependent proteolytical cleavage at the C-terminus.</text>
</comment>
<comment type="similarity">
    <text evidence="5">Belongs to the small heat shock protein (HSP20) family.</text>
</comment>
<gene>
    <name type="primary">CRYAA</name>
</gene>
<keyword id="KW-0007">Acetylation</keyword>
<keyword id="KW-0143">Chaperone</keyword>
<keyword id="KW-0963">Cytoplasm</keyword>
<keyword id="KW-0903">Direct protein sequencing</keyword>
<keyword id="KW-0273">Eye lens protein</keyword>
<keyword id="KW-0325">Glycoprotein</keyword>
<keyword id="KW-0479">Metal-binding</keyword>
<keyword id="KW-0488">Methylation</keyword>
<keyword id="KW-0539">Nucleus</keyword>
<keyword id="KW-0597">Phosphoprotein</keyword>
<keyword id="KW-0862">Zinc</keyword>
<evidence type="ECO:0000250" key="1"/>
<evidence type="ECO:0000250" key="2">
    <source>
        <dbReference type="UniProtKB" id="P02470"/>
    </source>
</evidence>
<evidence type="ECO:0000250" key="3">
    <source>
        <dbReference type="UniProtKB" id="P02474"/>
    </source>
</evidence>
<evidence type="ECO:0000250" key="4">
    <source>
        <dbReference type="UniProtKB" id="P02489"/>
    </source>
</evidence>
<evidence type="ECO:0000255" key="5">
    <source>
        <dbReference type="PROSITE-ProRule" id="PRU00285"/>
    </source>
</evidence>
<evidence type="ECO:0000256" key="6">
    <source>
        <dbReference type="SAM" id="MobiDB-lite"/>
    </source>
</evidence>
<organism>
    <name type="scientific">Meriones unguiculatus</name>
    <name type="common">Mongolian jird</name>
    <name type="synonym">Gerbillus unguiculatus</name>
    <dbReference type="NCBI Taxonomy" id="10047"/>
    <lineage>
        <taxon>Eukaryota</taxon>
        <taxon>Metazoa</taxon>
        <taxon>Chordata</taxon>
        <taxon>Craniata</taxon>
        <taxon>Vertebrata</taxon>
        <taxon>Euteleostomi</taxon>
        <taxon>Mammalia</taxon>
        <taxon>Eutheria</taxon>
        <taxon>Euarchontoglires</taxon>
        <taxon>Glires</taxon>
        <taxon>Rodentia</taxon>
        <taxon>Myomorpha</taxon>
        <taxon>Muroidea</taxon>
        <taxon>Muridae</taxon>
        <taxon>Gerbillinae</taxon>
        <taxon>Meriones</taxon>
    </lineage>
</organism>
<sequence length="173" mass="19792">MDVTIQHPWFKRALGPFYPSRLFDQFFGEGLFEYDLLPFLSSTISPYYRQSLFRTVLDSGISEVRSDRDKFVIFLDVKHFSPEDLTVKVLEDFVEIHGKHNERQDDHGYISREFHRRYRLPSNVDQSALSCSLSADGMLTFSGPKVQSGLDAGHSERAIPVSREEKPSSAPSS</sequence>
<reference key="1">
    <citation type="book" date="1980" name="Protides of the biological fluids, Proc. 28th colloquium">
        <title>Trends in the molecular evolution of alpha-crystallin.</title>
        <editorList>
            <person name="Peeters H."/>
        </editorList>
        <authorList>
            <person name="de Jong W.W."/>
            <person name="Zweers A."/>
            <person name="Goodman M."/>
        </authorList>
    </citation>
    <scope>PROTEIN SEQUENCE</scope>
</reference>
<accession>P68405</accession>
<accession>P02490</accession>
<accession>P82532</accession>
<accession>Q61444</accession>
<dbReference type="PIR" id="C94432">
    <property type="entry name" value="CYHYAB"/>
</dbReference>
<dbReference type="SMR" id="P68405"/>
<dbReference type="GlyCosmos" id="P68405">
    <property type="glycosylation" value="1 site, No reported glycans"/>
</dbReference>
<dbReference type="GO" id="GO:0005737">
    <property type="term" value="C:cytoplasm"/>
    <property type="evidence" value="ECO:0000250"/>
    <property type="project" value="UniProtKB"/>
</dbReference>
<dbReference type="GO" id="GO:0005634">
    <property type="term" value="C:nucleus"/>
    <property type="evidence" value="ECO:0000250"/>
    <property type="project" value="UniProtKB"/>
</dbReference>
<dbReference type="GO" id="GO:0046872">
    <property type="term" value="F:metal ion binding"/>
    <property type="evidence" value="ECO:0007669"/>
    <property type="project" value="UniProtKB-KW"/>
</dbReference>
<dbReference type="GO" id="GO:0005212">
    <property type="term" value="F:structural constituent of eye lens"/>
    <property type="evidence" value="ECO:0007669"/>
    <property type="project" value="UniProtKB-KW"/>
</dbReference>
<dbReference type="GO" id="GO:0051082">
    <property type="term" value="F:unfolded protein binding"/>
    <property type="evidence" value="ECO:0007669"/>
    <property type="project" value="TreeGrafter"/>
</dbReference>
<dbReference type="GO" id="GO:0002088">
    <property type="term" value="P:lens development in camera-type eye"/>
    <property type="evidence" value="ECO:0007669"/>
    <property type="project" value="TreeGrafter"/>
</dbReference>
<dbReference type="GO" id="GO:0043066">
    <property type="term" value="P:negative regulation of apoptotic process"/>
    <property type="evidence" value="ECO:0007669"/>
    <property type="project" value="TreeGrafter"/>
</dbReference>
<dbReference type="GO" id="GO:0042026">
    <property type="term" value="P:protein refolding"/>
    <property type="evidence" value="ECO:0007669"/>
    <property type="project" value="TreeGrafter"/>
</dbReference>
<dbReference type="GO" id="GO:0009408">
    <property type="term" value="P:response to heat"/>
    <property type="evidence" value="ECO:0007669"/>
    <property type="project" value="TreeGrafter"/>
</dbReference>
<dbReference type="CDD" id="cd06497">
    <property type="entry name" value="ACD_alphaA-crystallin_HspB4"/>
    <property type="match status" value="1"/>
</dbReference>
<dbReference type="FunFam" id="2.60.40.790:FF:000008">
    <property type="entry name" value="Alpha-crystallin A chain"/>
    <property type="match status" value="1"/>
</dbReference>
<dbReference type="Gene3D" id="2.60.40.790">
    <property type="match status" value="1"/>
</dbReference>
<dbReference type="InterPro" id="IPR002068">
    <property type="entry name" value="A-crystallin/Hsp20_dom"/>
</dbReference>
<dbReference type="InterPro" id="IPR055269">
    <property type="entry name" value="Alpha-crystallin/HSP_16"/>
</dbReference>
<dbReference type="InterPro" id="IPR001436">
    <property type="entry name" value="Alpha-crystallin/sHSP_animal"/>
</dbReference>
<dbReference type="InterPro" id="IPR003090">
    <property type="entry name" value="Alpha-crystallin_N"/>
</dbReference>
<dbReference type="InterPro" id="IPR008978">
    <property type="entry name" value="HSP20-like_chaperone"/>
</dbReference>
<dbReference type="PANTHER" id="PTHR45640:SF14">
    <property type="entry name" value="ALPHA-CRYSTALLIN A CHAIN"/>
    <property type="match status" value="1"/>
</dbReference>
<dbReference type="PANTHER" id="PTHR45640">
    <property type="entry name" value="HEAT SHOCK PROTEIN HSP-12.2-RELATED"/>
    <property type="match status" value="1"/>
</dbReference>
<dbReference type="Pfam" id="PF00525">
    <property type="entry name" value="Crystallin"/>
    <property type="match status" value="1"/>
</dbReference>
<dbReference type="Pfam" id="PF00011">
    <property type="entry name" value="HSP20"/>
    <property type="match status" value="1"/>
</dbReference>
<dbReference type="PIRSF" id="PIRSF036514">
    <property type="entry name" value="Sm_HSP_B1"/>
    <property type="match status" value="1"/>
</dbReference>
<dbReference type="PRINTS" id="PR00299">
    <property type="entry name" value="ACRYSTALLIN"/>
</dbReference>
<dbReference type="SUPFAM" id="SSF49764">
    <property type="entry name" value="HSP20-like chaperones"/>
    <property type="match status" value="1"/>
</dbReference>
<dbReference type="PROSITE" id="PS01031">
    <property type="entry name" value="SHSP"/>
    <property type="match status" value="1"/>
</dbReference>
<protein>
    <recommendedName>
        <fullName>Alpha-crystallin A chain</fullName>
    </recommendedName>
</protein>
<feature type="chain" id="PRO_0000125870" description="Alpha-crystallin A chain">
    <location>
        <begin position="1"/>
        <end position="173"/>
    </location>
</feature>
<feature type="domain" description="sHSP" evidence="5">
    <location>
        <begin position="52"/>
        <end position="162"/>
    </location>
</feature>
<feature type="region of interest" description="Required for complex formation with BFSP1 and BFSP2" evidence="4">
    <location>
        <begin position="1"/>
        <end position="63"/>
    </location>
</feature>
<feature type="region of interest" description="Disordered" evidence="6">
    <location>
        <begin position="145"/>
        <end position="173"/>
    </location>
</feature>
<feature type="compositionally biased region" description="Basic and acidic residues" evidence="6">
    <location>
        <begin position="153"/>
        <end position="167"/>
    </location>
</feature>
<feature type="binding site" evidence="2">
    <location>
        <position position="100"/>
    </location>
    <ligand>
        <name>Zn(2+)</name>
        <dbReference type="ChEBI" id="CHEBI:29105"/>
        <label>1</label>
    </ligand>
</feature>
<feature type="binding site" evidence="2">
    <location>
        <position position="102"/>
    </location>
    <ligand>
        <name>Zn(2+)</name>
        <dbReference type="ChEBI" id="CHEBI:29105"/>
        <label>1</label>
    </ligand>
</feature>
<feature type="binding site" evidence="2">
    <location>
        <position position="107"/>
    </location>
    <ligand>
        <name>Zn(2+)</name>
        <dbReference type="ChEBI" id="CHEBI:29105"/>
        <label>2</label>
    </ligand>
</feature>
<feature type="binding site" evidence="2">
    <location>
        <position position="154"/>
    </location>
    <ligand>
        <name>Zn(2+)</name>
        <dbReference type="ChEBI" id="CHEBI:29105"/>
        <label>3</label>
    </ligand>
</feature>
<feature type="modified residue" description="N-acetylmethionine" evidence="3">
    <location>
        <position position="1"/>
    </location>
</feature>
<feature type="modified residue" description="Deamidated glutamine; partial" evidence="1">
    <location>
        <position position="6"/>
    </location>
</feature>
<feature type="modified residue" description="Phosphoserine" evidence="4">
    <location>
        <position position="45"/>
    </location>
</feature>
<feature type="modified residue" description="Deamidated glutamine; partial" evidence="1">
    <location>
        <position position="50"/>
    </location>
</feature>
<feature type="modified residue" description="N6-acetyllysine" evidence="4">
    <location>
        <position position="70"/>
    </location>
</feature>
<feature type="modified residue" description="N6-acetyllysine" evidence="4">
    <location>
        <position position="99"/>
    </location>
</feature>
<feature type="modified residue" description="Deamidated asparagine; partial" evidence="1">
    <location>
        <position position="101"/>
    </location>
</feature>
<feature type="modified residue" description="Phosphoserine" evidence="2">
    <location>
        <position position="122"/>
    </location>
</feature>
<feature type="modified residue" description="Deamidated asparagine; partial" evidence="1">
    <location>
        <position position="123"/>
    </location>
</feature>
<feature type="modified residue" description="Deamidated glutamine; partial" evidence="1">
    <location>
        <position position="147"/>
    </location>
</feature>
<feature type="glycosylation site" description="O-linked (GlcNAc) serine" evidence="1">
    <location>
        <position position="162"/>
    </location>
</feature>
<name>CRYAA_MERUN</name>